<name>APT_PROMS</name>
<keyword id="KW-0963">Cytoplasm</keyword>
<keyword id="KW-0328">Glycosyltransferase</keyword>
<keyword id="KW-0660">Purine salvage</keyword>
<keyword id="KW-0808">Transferase</keyword>
<dbReference type="EC" id="2.4.2.7" evidence="1"/>
<dbReference type="EMBL" id="CP000551">
    <property type="protein sequence ID" value="ABM70514.1"/>
    <property type="molecule type" value="Genomic_DNA"/>
</dbReference>
<dbReference type="RefSeq" id="WP_011818660.1">
    <property type="nucleotide sequence ID" value="NC_008816.1"/>
</dbReference>
<dbReference type="SMR" id="A2BRV3"/>
<dbReference type="STRING" id="146891.A9601_12301"/>
<dbReference type="KEGG" id="pmb:A9601_12301"/>
<dbReference type="eggNOG" id="COG0503">
    <property type="taxonomic scope" value="Bacteria"/>
</dbReference>
<dbReference type="HOGENOM" id="CLU_063339_3_3_3"/>
<dbReference type="OrthoDB" id="9803963at2"/>
<dbReference type="UniPathway" id="UPA00588">
    <property type="reaction ID" value="UER00646"/>
</dbReference>
<dbReference type="Proteomes" id="UP000002590">
    <property type="component" value="Chromosome"/>
</dbReference>
<dbReference type="GO" id="GO:0005737">
    <property type="term" value="C:cytoplasm"/>
    <property type="evidence" value="ECO:0007669"/>
    <property type="project" value="UniProtKB-SubCell"/>
</dbReference>
<dbReference type="GO" id="GO:0002055">
    <property type="term" value="F:adenine binding"/>
    <property type="evidence" value="ECO:0007669"/>
    <property type="project" value="TreeGrafter"/>
</dbReference>
<dbReference type="GO" id="GO:0003999">
    <property type="term" value="F:adenine phosphoribosyltransferase activity"/>
    <property type="evidence" value="ECO:0007669"/>
    <property type="project" value="UniProtKB-UniRule"/>
</dbReference>
<dbReference type="GO" id="GO:0016208">
    <property type="term" value="F:AMP binding"/>
    <property type="evidence" value="ECO:0007669"/>
    <property type="project" value="TreeGrafter"/>
</dbReference>
<dbReference type="GO" id="GO:0006168">
    <property type="term" value="P:adenine salvage"/>
    <property type="evidence" value="ECO:0007669"/>
    <property type="project" value="InterPro"/>
</dbReference>
<dbReference type="GO" id="GO:0044209">
    <property type="term" value="P:AMP salvage"/>
    <property type="evidence" value="ECO:0007669"/>
    <property type="project" value="UniProtKB-UniRule"/>
</dbReference>
<dbReference type="GO" id="GO:0006166">
    <property type="term" value="P:purine ribonucleoside salvage"/>
    <property type="evidence" value="ECO:0007669"/>
    <property type="project" value="UniProtKB-KW"/>
</dbReference>
<dbReference type="CDD" id="cd06223">
    <property type="entry name" value="PRTases_typeI"/>
    <property type="match status" value="1"/>
</dbReference>
<dbReference type="FunFam" id="3.40.50.2020:FF:000004">
    <property type="entry name" value="Adenine phosphoribosyltransferase"/>
    <property type="match status" value="1"/>
</dbReference>
<dbReference type="Gene3D" id="3.40.50.2020">
    <property type="match status" value="1"/>
</dbReference>
<dbReference type="HAMAP" id="MF_00004">
    <property type="entry name" value="Aden_phosphoribosyltr"/>
    <property type="match status" value="1"/>
</dbReference>
<dbReference type="InterPro" id="IPR005764">
    <property type="entry name" value="Ade_phspho_trans"/>
</dbReference>
<dbReference type="InterPro" id="IPR000836">
    <property type="entry name" value="PRibTrfase_dom"/>
</dbReference>
<dbReference type="InterPro" id="IPR029057">
    <property type="entry name" value="PRTase-like"/>
</dbReference>
<dbReference type="InterPro" id="IPR050054">
    <property type="entry name" value="UPRTase/APRTase"/>
</dbReference>
<dbReference type="NCBIfam" id="NF002636">
    <property type="entry name" value="PRK02304.1-5"/>
    <property type="match status" value="1"/>
</dbReference>
<dbReference type="PANTHER" id="PTHR32315">
    <property type="entry name" value="ADENINE PHOSPHORIBOSYLTRANSFERASE"/>
    <property type="match status" value="1"/>
</dbReference>
<dbReference type="PANTHER" id="PTHR32315:SF3">
    <property type="entry name" value="ADENINE PHOSPHORIBOSYLTRANSFERASE"/>
    <property type="match status" value="1"/>
</dbReference>
<dbReference type="Pfam" id="PF00156">
    <property type="entry name" value="Pribosyltran"/>
    <property type="match status" value="1"/>
</dbReference>
<dbReference type="SUPFAM" id="SSF53271">
    <property type="entry name" value="PRTase-like"/>
    <property type="match status" value="1"/>
</dbReference>
<dbReference type="PROSITE" id="PS00103">
    <property type="entry name" value="PUR_PYR_PR_TRANSFER"/>
    <property type="match status" value="1"/>
</dbReference>
<sequence length="170" mass="19043">MKKLEDLILTYKDFPKKGIEFKDVLEILQYPDIFQDIILKMSSNQFLKKAEAIISIDARGFIFGSAVALESSKPMIVARKPGKLPGQLLTREYDLEYGKNSLSIQVNALKKFNSFVIVDDLLATGGTVKSVSRLIRDQKKKILGLITVVELKSLKGKSKLDFPVHSIVTL</sequence>
<evidence type="ECO:0000255" key="1">
    <source>
        <dbReference type="HAMAP-Rule" id="MF_00004"/>
    </source>
</evidence>
<reference key="1">
    <citation type="journal article" date="2007" name="PLoS Genet.">
        <title>Patterns and implications of gene gain and loss in the evolution of Prochlorococcus.</title>
        <authorList>
            <person name="Kettler G.C."/>
            <person name="Martiny A.C."/>
            <person name="Huang K."/>
            <person name="Zucker J."/>
            <person name="Coleman M.L."/>
            <person name="Rodrigue S."/>
            <person name="Chen F."/>
            <person name="Lapidus A."/>
            <person name="Ferriera S."/>
            <person name="Johnson J."/>
            <person name="Steglich C."/>
            <person name="Church G.M."/>
            <person name="Richardson P."/>
            <person name="Chisholm S.W."/>
        </authorList>
    </citation>
    <scope>NUCLEOTIDE SEQUENCE [LARGE SCALE GENOMIC DNA]</scope>
    <source>
        <strain>AS9601</strain>
    </source>
</reference>
<feature type="chain" id="PRO_1000000321" description="Adenine phosphoribosyltransferase">
    <location>
        <begin position="1"/>
        <end position="170"/>
    </location>
</feature>
<gene>
    <name evidence="1" type="primary">apt</name>
    <name type="ordered locus">A9601_12301</name>
</gene>
<organism>
    <name type="scientific">Prochlorococcus marinus (strain AS9601)</name>
    <dbReference type="NCBI Taxonomy" id="146891"/>
    <lineage>
        <taxon>Bacteria</taxon>
        <taxon>Bacillati</taxon>
        <taxon>Cyanobacteriota</taxon>
        <taxon>Cyanophyceae</taxon>
        <taxon>Synechococcales</taxon>
        <taxon>Prochlorococcaceae</taxon>
        <taxon>Prochlorococcus</taxon>
    </lineage>
</organism>
<comment type="function">
    <text evidence="1">Catalyzes a salvage reaction resulting in the formation of AMP, that is energically less costly than de novo synthesis.</text>
</comment>
<comment type="catalytic activity">
    <reaction evidence="1">
        <text>AMP + diphosphate = 5-phospho-alpha-D-ribose 1-diphosphate + adenine</text>
        <dbReference type="Rhea" id="RHEA:16609"/>
        <dbReference type="ChEBI" id="CHEBI:16708"/>
        <dbReference type="ChEBI" id="CHEBI:33019"/>
        <dbReference type="ChEBI" id="CHEBI:58017"/>
        <dbReference type="ChEBI" id="CHEBI:456215"/>
        <dbReference type="EC" id="2.4.2.7"/>
    </reaction>
</comment>
<comment type="pathway">
    <text evidence="1">Purine metabolism; AMP biosynthesis via salvage pathway; AMP from adenine: step 1/1.</text>
</comment>
<comment type="subunit">
    <text evidence="1">Homodimer.</text>
</comment>
<comment type="subcellular location">
    <subcellularLocation>
        <location evidence="1">Cytoplasm</location>
    </subcellularLocation>
</comment>
<comment type="similarity">
    <text evidence="1">Belongs to the purine/pyrimidine phosphoribosyltransferase family.</text>
</comment>
<protein>
    <recommendedName>
        <fullName evidence="1">Adenine phosphoribosyltransferase</fullName>
        <shortName evidence="1">APRT</shortName>
        <ecNumber evidence="1">2.4.2.7</ecNumber>
    </recommendedName>
</protein>
<proteinExistence type="inferred from homology"/>
<accession>A2BRV3</accession>